<dbReference type="EMBL" id="AE015929">
    <property type="protein sequence ID" value="AAO05465.1"/>
    <property type="molecule type" value="Genomic_DNA"/>
</dbReference>
<dbReference type="RefSeq" id="NP_765379.1">
    <property type="nucleotide sequence ID" value="NC_004461.1"/>
</dbReference>
<dbReference type="RefSeq" id="WP_011082767.1">
    <property type="nucleotide sequence ID" value="NC_004461.1"/>
</dbReference>
<dbReference type="SMR" id="Q8CRG0"/>
<dbReference type="KEGG" id="sep:SE_1824"/>
<dbReference type="PATRIC" id="fig|176280.10.peg.1780"/>
<dbReference type="eggNOG" id="COG0087">
    <property type="taxonomic scope" value="Bacteria"/>
</dbReference>
<dbReference type="HOGENOM" id="CLU_044142_4_1_9"/>
<dbReference type="OrthoDB" id="9806135at2"/>
<dbReference type="Proteomes" id="UP000001411">
    <property type="component" value="Chromosome"/>
</dbReference>
<dbReference type="GO" id="GO:0022625">
    <property type="term" value="C:cytosolic large ribosomal subunit"/>
    <property type="evidence" value="ECO:0007669"/>
    <property type="project" value="TreeGrafter"/>
</dbReference>
<dbReference type="GO" id="GO:0019843">
    <property type="term" value="F:rRNA binding"/>
    <property type="evidence" value="ECO:0007669"/>
    <property type="project" value="UniProtKB-UniRule"/>
</dbReference>
<dbReference type="GO" id="GO:0003735">
    <property type="term" value="F:structural constituent of ribosome"/>
    <property type="evidence" value="ECO:0007669"/>
    <property type="project" value="InterPro"/>
</dbReference>
<dbReference type="GO" id="GO:0006412">
    <property type="term" value="P:translation"/>
    <property type="evidence" value="ECO:0007669"/>
    <property type="project" value="UniProtKB-UniRule"/>
</dbReference>
<dbReference type="FunFam" id="2.40.30.10:FF:000004">
    <property type="entry name" value="50S ribosomal protein L3"/>
    <property type="match status" value="1"/>
</dbReference>
<dbReference type="FunFam" id="3.30.160.810:FF:000002">
    <property type="entry name" value="50S ribosomal protein L3"/>
    <property type="match status" value="1"/>
</dbReference>
<dbReference type="Gene3D" id="3.30.160.810">
    <property type="match status" value="1"/>
</dbReference>
<dbReference type="Gene3D" id="2.40.30.10">
    <property type="entry name" value="Translation factors"/>
    <property type="match status" value="1"/>
</dbReference>
<dbReference type="HAMAP" id="MF_01325_B">
    <property type="entry name" value="Ribosomal_uL3_B"/>
    <property type="match status" value="1"/>
</dbReference>
<dbReference type="InterPro" id="IPR000597">
    <property type="entry name" value="Ribosomal_uL3"/>
</dbReference>
<dbReference type="InterPro" id="IPR019927">
    <property type="entry name" value="Ribosomal_uL3_bac/org-type"/>
</dbReference>
<dbReference type="InterPro" id="IPR019926">
    <property type="entry name" value="Ribosomal_uL3_CS"/>
</dbReference>
<dbReference type="InterPro" id="IPR009000">
    <property type="entry name" value="Transl_B-barrel_sf"/>
</dbReference>
<dbReference type="NCBIfam" id="TIGR03625">
    <property type="entry name" value="L3_bact"/>
    <property type="match status" value="1"/>
</dbReference>
<dbReference type="PANTHER" id="PTHR11229">
    <property type="entry name" value="50S RIBOSOMAL PROTEIN L3"/>
    <property type="match status" value="1"/>
</dbReference>
<dbReference type="PANTHER" id="PTHR11229:SF16">
    <property type="entry name" value="LARGE RIBOSOMAL SUBUNIT PROTEIN UL3C"/>
    <property type="match status" value="1"/>
</dbReference>
<dbReference type="Pfam" id="PF00297">
    <property type="entry name" value="Ribosomal_L3"/>
    <property type="match status" value="1"/>
</dbReference>
<dbReference type="SUPFAM" id="SSF50447">
    <property type="entry name" value="Translation proteins"/>
    <property type="match status" value="1"/>
</dbReference>
<dbReference type="PROSITE" id="PS00474">
    <property type="entry name" value="RIBOSOMAL_L3"/>
    <property type="match status" value="1"/>
</dbReference>
<keyword id="KW-0687">Ribonucleoprotein</keyword>
<keyword id="KW-0689">Ribosomal protein</keyword>
<keyword id="KW-0694">RNA-binding</keyword>
<keyword id="KW-0699">rRNA-binding</keyword>
<sequence length="220" mass="23669">MTKGILGRKIGMTQVFGENGELIPVTVVEASQNVVLQKKTEEVDGYNAIQVGFEDKQAYKKGSKSNKYANKPAEGHAKKADTAPKRFIREFRNVNVDEYELGQEVSVDTFETGDIIDVTGVSKGKGFQGAIKRHGQGRGPMAHGSHFHRAPGSVGMASDASKVFKGQKMPGRMGGNTVTVQNLEVVQVDTENSVILVKGNVPGPKKGLVEITTSIKKGNK</sequence>
<name>RL3_STAES</name>
<feature type="chain" id="PRO_0000077159" description="Large ribosomal subunit protein uL3">
    <location>
        <begin position="1"/>
        <end position="220"/>
    </location>
</feature>
<feature type="region of interest" description="Disordered" evidence="2">
    <location>
        <begin position="61"/>
        <end position="81"/>
    </location>
</feature>
<gene>
    <name evidence="1" type="primary">rplC</name>
    <name type="ordered locus">SE_1824</name>
</gene>
<proteinExistence type="inferred from homology"/>
<accession>Q8CRG0</accession>
<evidence type="ECO:0000255" key="1">
    <source>
        <dbReference type="HAMAP-Rule" id="MF_01325"/>
    </source>
</evidence>
<evidence type="ECO:0000256" key="2">
    <source>
        <dbReference type="SAM" id="MobiDB-lite"/>
    </source>
</evidence>
<evidence type="ECO:0000305" key="3"/>
<organism>
    <name type="scientific">Staphylococcus epidermidis (strain ATCC 12228 / FDA PCI 1200)</name>
    <dbReference type="NCBI Taxonomy" id="176280"/>
    <lineage>
        <taxon>Bacteria</taxon>
        <taxon>Bacillati</taxon>
        <taxon>Bacillota</taxon>
        <taxon>Bacilli</taxon>
        <taxon>Bacillales</taxon>
        <taxon>Staphylococcaceae</taxon>
        <taxon>Staphylococcus</taxon>
    </lineage>
</organism>
<comment type="function">
    <text evidence="1">One of the primary rRNA binding proteins, it binds directly near the 3'-end of the 23S rRNA, where it nucleates assembly of the 50S subunit.</text>
</comment>
<comment type="subunit">
    <text evidence="1">Part of the 50S ribosomal subunit. Forms a cluster with proteins L14 and L19.</text>
</comment>
<comment type="similarity">
    <text evidence="1">Belongs to the universal ribosomal protein uL3 family.</text>
</comment>
<protein>
    <recommendedName>
        <fullName evidence="1">Large ribosomal subunit protein uL3</fullName>
    </recommendedName>
    <alternativeName>
        <fullName evidence="3">50S ribosomal protein L3</fullName>
    </alternativeName>
</protein>
<reference key="1">
    <citation type="journal article" date="2003" name="Mol. Microbiol.">
        <title>Genome-based analysis of virulence genes in a non-biofilm-forming Staphylococcus epidermidis strain (ATCC 12228).</title>
        <authorList>
            <person name="Zhang Y.-Q."/>
            <person name="Ren S.-X."/>
            <person name="Li H.-L."/>
            <person name="Wang Y.-X."/>
            <person name="Fu G."/>
            <person name="Yang J."/>
            <person name="Qin Z.-Q."/>
            <person name="Miao Y.-G."/>
            <person name="Wang W.-Y."/>
            <person name="Chen R.-S."/>
            <person name="Shen Y."/>
            <person name="Chen Z."/>
            <person name="Yuan Z.-H."/>
            <person name="Zhao G.-P."/>
            <person name="Qu D."/>
            <person name="Danchin A."/>
            <person name="Wen Y.-M."/>
        </authorList>
    </citation>
    <scope>NUCLEOTIDE SEQUENCE [LARGE SCALE GENOMIC DNA]</scope>
    <source>
        <strain>ATCC 12228 / FDA PCI 1200</strain>
    </source>
</reference>